<comment type="function">
    <text evidence="1">Attaches a formyl group to the free amino group of methionyl-tRNA(fMet). The formyl group appears to play a dual role in the initiator identity of N-formylmethionyl-tRNA by promoting its recognition by IF2 and preventing the misappropriation of this tRNA by the elongation apparatus.</text>
</comment>
<comment type="catalytic activity">
    <reaction evidence="1">
        <text>L-methionyl-tRNA(fMet) + (6R)-10-formyltetrahydrofolate = N-formyl-L-methionyl-tRNA(fMet) + (6S)-5,6,7,8-tetrahydrofolate + H(+)</text>
        <dbReference type="Rhea" id="RHEA:24380"/>
        <dbReference type="Rhea" id="RHEA-COMP:9952"/>
        <dbReference type="Rhea" id="RHEA-COMP:9953"/>
        <dbReference type="ChEBI" id="CHEBI:15378"/>
        <dbReference type="ChEBI" id="CHEBI:57453"/>
        <dbReference type="ChEBI" id="CHEBI:78530"/>
        <dbReference type="ChEBI" id="CHEBI:78844"/>
        <dbReference type="ChEBI" id="CHEBI:195366"/>
        <dbReference type="EC" id="2.1.2.9"/>
    </reaction>
</comment>
<comment type="similarity">
    <text evidence="1">Belongs to the Fmt family.</text>
</comment>
<proteinExistence type="inferred from homology"/>
<accession>Q7VQC1</accession>
<gene>
    <name evidence="1" type="primary">fmt</name>
    <name type="ordered locus">Bfl218</name>
</gene>
<name>FMT_BLOFL</name>
<evidence type="ECO:0000255" key="1">
    <source>
        <dbReference type="HAMAP-Rule" id="MF_00182"/>
    </source>
</evidence>
<dbReference type="EC" id="2.1.2.9" evidence="1"/>
<dbReference type="EMBL" id="BX248583">
    <property type="protein sequence ID" value="CAD83733.1"/>
    <property type="molecule type" value="Genomic_DNA"/>
</dbReference>
<dbReference type="SMR" id="Q7VQC1"/>
<dbReference type="STRING" id="203907.Bfl218"/>
<dbReference type="KEGG" id="bfl:Bfl218"/>
<dbReference type="eggNOG" id="COG0223">
    <property type="taxonomic scope" value="Bacteria"/>
</dbReference>
<dbReference type="HOGENOM" id="CLU_033347_1_2_6"/>
<dbReference type="OrthoDB" id="9802815at2"/>
<dbReference type="Proteomes" id="UP000002192">
    <property type="component" value="Chromosome"/>
</dbReference>
<dbReference type="GO" id="GO:0005829">
    <property type="term" value="C:cytosol"/>
    <property type="evidence" value="ECO:0007669"/>
    <property type="project" value="TreeGrafter"/>
</dbReference>
<dbReference type="GO" id="GO:0004479">
    <property type="term" value="F:methionyl-tRNA formyltransferase activity"/>
    <property type="evidence" value="ECO:0007669"/>
    <property type="project" value="UniProtKB-UniRule"/>
</dbReference>
<dbReference type="CDD" id="cd08646">
    <property type="entry name" value="FMT_core_Met-tRNA-FMT_N"/>
    <property type="match status" value="1"/>
</dbReference>
<dbReference type="CDD" id="cd08704">
    <property type="entry name" value="Met_tRNA_FMT_C"/>
    <property type="match status" value="1"/>
</dbReference>
<dbReference type="Gene3D" id="3.40.50.12230">
    <property type="match status" value="1"/>
</dbReference>
<dbReference type="HAMAP" id="MF_00182">
    <property type="entry name" value="Formyl_trans"/>
    <property type="match status" value="1"/>
</dbReference>
<dbReference type="InterPro" id="IPR005794">
    <property type="entry name" value="Fmt"/>
</dbReference>
<dbReference type="InterPro" id="IPR005793">
    <property type="entry name" value="Formyl_trans_C"/>
</dbReference>
<dbReference type="InterPro" id="IPR002376">
    <property type="entry name" value="Formyl_transf_N"/>
</dbReference>
<dbReference type="InterPro" id="IPR036477">
    <property type="entry name" value="Formyl_transf_N_sf"/>
</dbReference>
<dbReference type="InterPro" id="IPR011034">
    <property type="entry name" value="Formyl_transferase-like_C_sf"/>
</dbReference>
<dbReference type="InterPro" id="IPR044135">
    <property type="entry name" value="Met-tRNA-FMT_C"/>
</dbReference>
<dbReference type="InterPro" id="IPR041711">
    <property type="entry name" value="Met-tRNA-FMT_N"/>
</dbReference>
<dbReference type="NCBIfam" id="TIGR00460">
    <property type="entry name" value="fmt"/>
    <property type="match status" value="1"/>
</dbReference>
<dbReference type="PANTHER" id="PTHR11138">
    <property type="entry name" value="METHIONYL-TRNA FORMYLTRANSFERASE"/>
    <property type="match status" value="1"/>
</dbReference>
<dbReference type="PANTHER" id="PTHR11138:SF5">
    <property type="entry name" value="METHIONYL-TRNA FORMYLTRANSFERASE, MITOCHONDRIAL"/>
    <property type="match status" value="1"/>
</dbReference>
<dbReference type="Pfam" id="PF02911">
    <property type="entry name" value="Formyl_trans_C"/>
    <property type="match status" value="1"/>
</dbReference>
<dbReference type="Pfam" id="PF00551">
    <property type="entry name" value="Formyl_trans_N"/>
    <property type="match status" value="1"/>
</dbReference>
<dbReference type="SUPFAM" id="SSF50486">
    <property type="entry name" value="FMT C-terminal domain-like"/>
    <property type="match status" value="1"/>
</dbReference>
<dbReference type="SUPFAM" id="SSF53328">
    <property type="entry name" value="Formyltransferase"/>
    <property type="match status" value="1"/>
</dbReference>
<keyword id="KW-0648">Protein biosynthesis</keyword>
<keyword id="KW-1185">Reference proteome</keyword>
<keyword id="KW-0808">Transferase</keyword>
<reference key="1">
    <citation type="journal article" date="2003" name="Proc. Natl. Acad. Sci. U.S.A.">
        <title>The genome sequence of Blochmannia floridanus: comparative analysis of reduced genomes.</title>
        <authorList>
            <person name="Gil R."/>
            <person name="Silva F.J."/>
            <person name="Zientz E."/>
            <person name="Delmotte F."/>
            <person name="Gonzalez-Candelas F."/>
            <person name="Latorre A."/>
            <person name="Rausell C."/>
            <person name="Kamerbeek J."/>
            <person name="Gadau J."/>
            <person name="Hoelldobler B."/>
            <person name="van Ham R.C.H.J."/>
            <person name="Gross R."/>
            <person name="Moya A."/>
        </authorList>
    </citation>
    <scope>NUCLEOTIDE SEQUENCE [LARGE SCALE GENOMIC DNA]</scope>
</reference>
<sequence>MKLHLKGLRIAFFGTSDFAAYHLFVLIHCSIHKIVAIFTQESIKIKQKSSILSIHTISQINNILLFQSYFLSQSQINHIIKNLNIDIIIVVSYGVILSQEILHIPKLGCINIHGSLLPRWRGPAPIQRALEHGDTMTGISIIQMNSNIDTGDILHSTPCKISPKDTSYTLSKKLACIGSIALLKTIEKIILGTCKNIPQDTSNITYAYKLNKKEAHINWNKSAIEIERRIRAFNPWPVSYFKIKNQYIRVWNAEINKNSINTDQYNDFQPGTILKTHPNGIYVITGSGIIILTVLQISGKKKIHVKDLMNAYSSLFTMHSVLT</sequence>
<protein>
    <recommendedName>
        <fullName evidence="1">Methionyl-tRNA formyltransferase</fullName>
        <ecNumber evidence="1">2.1.2.9</ecNumber>
    </recommendedName>
</protein>
<organism>
    <name type="scientific">Blochmanniella floridana</name>
    <dbReference type="NCBI Taxonomy" id="203907"/>
    <lineage>
        <taxon>Bacteria</taxon>
        <taxon>Pseudomonadati</taxon>
        <taxon>Pseudomonadota</taxon>
        <taxon>Gammaproteobacteria</taxon>
        <taxon>Enterobacterales</taxon>
        <taxon>Enterobacteriaceae</taxon>
        <taxon>ant endosymbionts</taxon>
        <taxon>Candidatus Blochmanniella</taxon>
    </lineage>
</organism>
<feature type="chain" id="PRO_0000082940" description="Methionyl-tRNA formyltransferase">
    <location>
        <begin position="1"/>
        <end position="323"/>
    </location>
</feature>
<feature type="binding site" evidence="1">
    <location>
        <begin position="115"/>
        <end position="118"/>
    </location>
    <ligand>
        <name>(6S)-5,6,7,8-tetrahydrofolate</name>
        <dbReference type="ChEBI" id="CHEBI:57453"/>
    </ligand>
</feature>